<comment type="function">
    <text evidence="1">F(1)F(0) ATP synthase produces ATP from ADP in the presence of a proton or sodium gradient. F-type ATPases consist of two structural domains, F(1) containing the extramembraneous catalytic core and F(0) containing the membrane proton channel, linked together by a central stalk and a peripheral stalk. During catalysis, ATP synthesis in the catalytic domain of F(1) is coupled via a rotary mechanism of the central stalk subunits to proton translocation.</text>
</comment>
<comment type="function">
    <text evidence="1">This protein is part of the stalk that links CF(0) to CF(1). It either transmits conformational changes from CF(0) to CF(1) or is implicated in proton conduction.</text>
</comment>
<comment type="subunit">
    <text evidence="1">F-type ATPases have 2 components, F(1) - the catalytic core - and F(0) - the membrane proton channel. F(1) has five subunits: alpha(3), beta(3), gamma(1), delta(1), epsilon(1). F(0) has three main subunits: a(1), b(2) and c(10-14). The alpha and beta chains form an alternating ring which encloses part of the gamma chain. F(1) is attached to F(0) by a central stalk formed by the gamma and epsilon chains, while a peripheral stalk is formed by the delta and b chains.</text>
</comment>
<comment type="subcellular location">
    <subcellularLocation>
        <location evidence="1">Cell inner membrane</location>
        <topology evidence="1">Peripheral membrane protein</topology>
    </subcellularLocation>
</comment>
<comment type="similarity">
    <text evidence="1">Belongs to the ATPase delta chain family.</text>
</comment>
<protein>
    <recommendedName>
        <fullName evidence="1">ATP synthase subunit delta</fullName>
    </recommendedName>
    <alternativeName>
        <fullName evidence="1">ATP synthase F(1) sector subunit delta</fullName>
    </alternativeName>
    <alternativeName>
        <fullName evidence="1">F-type ATPase subunit delta</fullName>
        <shortName evidence="1">F-ATPase subunit delta</shortName>
    </alternativeName>
</protein>
<evidence type="ECO:0000255" key="1">
    <source>
        <dbReference type="HAMAP-Rule" id="MF_01416"/>
    </source>
</evidence>
<dbReference type="EMBL" id="CP000614">
    <property type="protein sequence ID" value="ABO53135.1"/>
    <property type="molecule type" value="Genomic_DNA"/>
</dbReference>
<dbReference type="SMR" id="A4JA32"/>
<dbReference type="KEGG" id="bvi:Bcep1808_0112"/>
<dbReference type="eggNOG" id="COG0712">
    <property type="taxonomic scope" value="Bacteria"/>
</dbReference>
<dbReference type="HOGENOM" id="CLU_085114_3_0_4"/>
<dbReference type="Proteomes" id="UP000002287">
    <property type="component" value="Chromosome 1"/>
</dbReference>
<dbReference type="GO" id="GO:0005886">
    <property type="term" value="C:plasma membrane"/>
    <property type="evidence" value="ECO:0007669"/>
    <property type="project" value="UniProtKB-SubCell"/>
</dbReference>
<dbReference type="GO" id="GO:0045259">
    <property type="term" value="C:proton-transporting ATP synthase complex"/>
    <property type="evidence" value="ECO:0007669"/>
    <property type="project" value="UniProtKB-KW"/>
</dbReference>
<dbReference type="GO" id="GO:0046933">
    <property type="term" value="F:proton-transporting ATP synthase activity, rotational mechanism"/>
    <property type="evidence" value="ECO:0007669"/>
    <property type="project" value="UniProtKB-UniRule"/>
</dbReference>
<dbReference type="Gene3D" id="1.10.520.20">
    <property type="entry name" value="N-terminal domain of the delta subunit of the F1F0-ATP synthase"/>
    <property type="match status" value="1"/>
</dbReference>
<dbReference type="HAMAP" id="MF_01416">
    <property type="entry name" value="ATP_synth_delta_bact"/>
    <property type="match status" value="1"/>
</dbReference>
<dbReference type="InterPro" id="IPR026015">
    <property type="entry name" value="ATP_synth_OSCP/delta_N_sf"/>
</dbReference>
<dbReference type="InterPro" id="IPR000711">
    <property type="entry name" value="ATPase_OSCP/dsu"/>
</dbReference>
<dbReference type="NCBIfam" id="TIGR01145">
    <property type="entry name" value="ATP_synt_delta"/>
    <property type="match status" value="1"/>
</dbReference>
<dbReference type="NCBIfam" id="NF004402">
    <property type="entry name" value="PRK05758.2-2"/>
    <property type="match status" value="1"/>
</dbReference>
<dbReference type="PANTHER" id="PTHR11910">
    <property type="entry name" value="ATP SYNTHASE DELTA CHAIN"/>
    <property type="match status" value="1"/>
</dbReference>
<dbReference type="Pfam" id="PF00213">
    <property type="entry name" value="OSCP"/>
    <property type="match status" value="1"/>
</dbReference>
<dbReference type="PRINTS" id="PR00125">
    <property type="entry name" value="ATPASEDELTA"/>
</dbReference>
<dbReference type="SUPFAM" id="SSF47928">
    <property type="entry name" value="N-terminal domain of the delta subunit of the F1F0-ATP synthase"/>
    <property type="match status" value="1"/>
</dbReference>
<keyword id="KW-0066">ATP synthesis</keyword>
<keyword id="KW-0997">Cell inner membrane</keyword>
<keyword id="KW-1003">Cell membrane</keyword>
<keyword id="KW-0139">CF(1)</keyword>
<keyword id="KW-0375">Hydrogen ion transport</keyword>
<keyword id="KW-0406">Ion transport</keyword>
<keyword id="KW-0472">Membrane</keyword>
<keyword id="KW-0813">Transport</keyword>
<name>ATPD_BURVG</name>
<proteinExistence type="inferred from homology"/>
<organism>
    <name type="scientific">Burkholderia vietnamiensis (strain G4 / LMG 22486)</name>
    <name type="common">Burkholderia cepacia (strain R1808)</name>
    <dbReference type="NCBI Taxonomy" id="269482"/>
    <lineage>
        <taxon>Bacteria</taxon>
        <taxon>Pseudomonadati</taxon>
        <taxon>Pseudomonadota</taxon>
        <taxon>Betaproteobacteria</taxon>
        <taxon>Burkholderiales</taxon>
        <taxon>Burkholderiaceae</taxon>
        <taxon>Burkholderia</taxon>
        <taxon>Burkholderia cepacia complex</taxon>
    </lineage>
</organism>
<reference key="1">
    <citation type="submission" date="2007-03" db="EMBL/GenBank/DDBJ databases">
        <title>Complete sequence of chromosome 1 of Burkholderia vietnamiensis G4.</title>
        <authorList>
            <consortium name="US DOE Joint Genome Institute"/>
            <person name="Copeland A."/>
            <person name="Lucas S."/>
            <person name="Lapidus A."/>
            <person name="Barry K."/>
            <person name="Detter J.C."/>
            <person name="Glavina del Rio T."/>
            <person name="Hammon N."/>
            <person name="Israni S."/>
            <person name="Dalin E."/>
            <person name="Tice H."/>
            <person name="Pitluck S."/>
            <person name="Chain P."/>
            <person name="Malfatti S."/>
            <person name="Shin M."/>
            <person name="Vergez L."/>
            <person name="Schmutz J."/>
            <person name="Larimer F."/>
            <person name="Land M."/>
            <person name="Hauser L."/>
            <person name="Kyrpides N."/>
            <person name="Tiedje J."/>
            <person name="Richardson P."/>
        </authorList>
    </citation>
    <scope>NUCLEOTIDE SEQUENCE [LARGE SCALE GENOMIC DNA]</scope>
    <source>
        <strain>G4 / LMG 22486</strain>
    </source>
</reference>
<gene>
    <name evidence="1" type="primary">atpH</name>
    <name type="ordered locus">Bcep1808_0112</name>
</gene>
<feature type="chain" id="PRO_0000370930" description="ATP synthase subunit delta">
    <location>
        <begin position="1"/>
        <end position="179"/>
    </location>
</feature>
<accession>A4JA32</accession>
<sequence>MAELATIARPYAEALFRVAEGGDIAAWSTLVQELAQVAHLPEVLSVASSPKVTRKQVAELLLVAVKSPLAAGAEAKNFVQMLVDNHRIALLPEIAEQFEALKNEREGAADAEIVSAFPLEGAELDSLVSGLERKFKRKLKPTVEVDSSLIGGVRVTVGDEVLDTSVRARLASMQAALTA</sequence>